<proteinExistence type="inferred from homology"/>
<gene>
    <name evidence="2" type="primary">murD</name>
    <name type="ordered locus">STM0126</name>
</gene>
<evidence type="ECO:0000250" key="1"/>
<evidence type="ECO:0000255" key="2">
    <source>
        <dbReference type="HAMAP-Rule" id="MF_00639"/>
    </source>
</evidence>
<comment type="function">
    <text evidence="2">Cell wall formation. Catalyzes the addition of glutamate to the nucleotide precursor UDP-N-acetylmuramoyl-L-alanine (UMA).</text>
</comment>
<comment type="catalytic activity">
    <reaction evidence="2">
        <text>UDP-N-acetyl-alpha-D-muramoyl-L-alanine + D-glutamate + ATP = UDP-N-acetyl-alpha-D-muramoyl-L-alanyl-D-glutamate + ADP + phosphate + H(+)</text>
        <dbReference type="Rhea" id="RHEA:16429"/>
        <dbReference type="ChEBI" id="CHEBI:15378"/>
        <dbReference type="ChEBI" id="CHEBI:29986"/>
        <dbReference type="ChEBI" id="CHEBI:30616"/>
        <dbReference type="ChEBI" id="CHEBI:43474"/>
        <dbReference type="ChEBI" id="CHEBI:83898"/>
        <dbReference type="ChEBI" id="CHEBI:83900"/>
        <dbReference type="ChEBI" id="CHEBI:456216"/>
        <dbReference type="EC" id="6.3.2.9"/>
    </reaction>
</comment>
<comment type="pathway">
    <text evidence="2">Cell wall biogenesis; peptidoglycan biosynthesis.</text>
</comment>
<comment type="subcellular location">
    <subcellularLocation>
        <location evidence="2">Cytoplasm</location>
    </subcellularLocation>
</comment>
<comment type="similarity">
    <text evidence="2">Belongs to the MurCDEF family.</text>
</comment>
<feature type="initiator methionine" description="Removed" evidence="1">
    <location>
        <position position="1"/>
    </location>
</feature>
<feature type="chain" id="PRO_0000109078" description="UDP-N-acetylmuramoylalanine--D-glutamate ligase">
    <location>
        <begin position="2"/>
        <end position="438"/>
    </location>
</feature>
<feature type="binding site" evidence="2">
    <location>
        <begin position="112"/>
        <end position="118"/>
    </location>
    <ligand>
        <name>ATP</name>
        <dbReference type="ChEBI" id="CHEBI:30616"/>
    </ligand>
</feature>
<name>MURD_SALTY</name>
<dbReference type="EC" id="6.3.2.9" evidence="2"/>
<dbReference type="EMBL" id="AE006468">
    <property type="protein sequence ID" value="AAL19090.1"/>
    <property type="molecule type" value="Genomic_DNA"/>
</dbReference>
<dbReference type="RefSeq" id="NP_459131.1">
    <property type="nucleotide sequence ID" value="NC_003197.2"/>
</dbReference>
<dbReference type="RefSeq" id="WP_000796445.1">
    <property type="nucleotide sequence ID" value="NC_003197.2"/>
</dbReference>
<dbReference type="SMR" id="Q8ZRU4"/>
<dbReference type="STRING" id="99287.STM0126"/>
<dbReference type="PaxDb" id="99287-STM0126"/>
<dbReference type="GeneID" id="1251644"/>
<dbReference type="KEGG" id="stm:STM0126"/>
<dbReference type="PATRIC" id="fig|99287.12.peg.132"/>
<dbReference type="HOGENOM" id="CLU_032540_1_0_6"/>
<dbReference type="OMA" id="CSSFDMF"/>
<dbReference type="PhylomeDB" id="Q8ZRU4"/>
<dbReference type="BioCyc" id="SENT99287:STM0126-MONOMER"/>
<dbReference type="UniPathway" id="UPA00219"/>
<dbReference type="Proteomes" id="UP000001014">
    <property type="component" value="Chromosome"/>
</dbReference>
<dbReference type="GO" id="GO:0005737">
    <property type="term" value="C:cytoplasm"/>
    <property type="evidence" value="ECO:0007669"/>
    <property type="project" value="UniProtKB-SubCell"/>
</dbReference>
<dbReference type="GO" id="GO:0005524">
    <property type="term" value="F:ATP binding"/>
    <property type="evidence" value="ECO:0007669"/>
    <property type="project" value="UniProtKB-UniRule"/>
</dbReference>
<dbReference type="GO" id="GO:0008764">
    <property type="term" value="F:UDP-N-acetylmuramoylalanine-D-glutamate ligase activity"/>
    <property type="evidence" value="ECO:0007669"/>
    <property type="project" value="UniProtKB-UniRule"/>
</dbReference>
<dbReference type="GO" id="GO:0051301">
    <property type="term" value="P:cell division"/>
    <property type="evidence" value="ECO:0007669"/>
    <property type="project" value="UniProtKB-KW"/>
</dbReference>
<dbReference type="GO" id="GO:0071555">
    <property type="term" value="P:cell wall organization"/>
    <property type="evidence" value="ECO:0007669"/>
    <property type="project" value="UniProtKB-KW"/>
</dbReference>
<dbReference type="GO" id="GO:0009252">
    <property type="term" value="P:peptidoglycan biosynthetic process"/>
    <property type="evidence" value="ECO:0007669"/>
    <property type="project" value="UniProtKB-UniRule"/>
</dbReference>
<dbReference type="GO" id="GO:0008360">
    <property type="term" value="P:regulation of cell shape"/>
    <property type="evidence" value="ECO:0007669"/>
    <property type="project" value="UniProtKB-KW"/>
</dbReference>
<dbReference type="FunFam" id="3.40.1190.10:FF:000002">
    <property type="entry name" value="UDP-N-acetylmuramoylalanine--D-glutamate ligase"/>
    <property type="match status" value="1"/>
</dbReference>
<dbReference type="FunFam" id="3.40.50.720:FF:000126">
    <property type="entry name" value="UDP-N-acetylmuramoylalanine--D-glutamate ligase"/>
    <property type="match status" value="1"/>
</dbReference>
<dbReference type="FunFam" id="3.90.190.20:FF:000003">
    <property type="entry name" value="UDP-N-acetylmuramoylalanine--D-glutamate ligase"/>
    <property type="match status" value="1"/>
</dbReference>
<dbReference type="Gene3D" id="3.90.190.20">
    <property type="entry name" value="Mur ligase, C-terminal domain"/>
    <property type="match status" value="1"/>
</dbReference>
<dbReference type="Gene3D" id="3.40.1190.10">
    <property type="entry name" value="Mur-like, catalytic domain"/>
    <property type="match status" value="1"/>
</dbReference>
<dbReference type="Gene3D" id="3.40.50.720">
    <property type="entry name" value="NAD(P)-binding Rossmann-like Domain"/>
    <property type="match status" value="1"/>
</dbReference>
<dbReference type="HAMAP" id="MF_00639">
    <property type="entry name" value="MurD"/>
    <property type="match status" value="1"/>
</dbReference>
<dbReference type="InterPro" id="IPR036565">
    <property type="entry name" value="Mur-like_cat_sf"/>
</dbReference>
<dbReference type="InterPro" id="IPR004101">
    <property type="entry name" value="Mur_ligase_C"/>
</dbReference>
<dbReference type="InterPro" id="IPR036615">
    <property type="entry name" value="Mur_ligase_C_dom_sf"/>
</dbReference>
<dbReference type="InterPro" id="IPR013221">
    <property type="entry name" value="Mur_ligase_cen"/>
</dbReference>
<dbReference type="InterPro" id="IPR005762">
    <property type="entry name" value="MurD"/>
</dbReference>
<dbReference type="NCBIfam" id="TIGR01087">
    <property type="entry name" value="murD"/>
    <property type="match status" value="1"/>
</dbReference>
<dbReference type="PANTHER" id="PTHR43692">
    <property type="entry name" value="UDP-N-ACETYLMURAMOYLALANINE--D-GLUTAMATE LIGASE"/>
    <property type="match status" value="1"/>
</dbReference>
<dbReference type="PANTHER" id="PTHR43692:SF1">
    <property type="entry name" value="UDP-N-ACETYLMURAMOYLALANINE--D-GLUTAMATE LIGASE"/>
    <property type="match status" value="1"/>
</dbReference>
<dbReference type="Pfam" id="PF02875">
    <property type="entry name" value="Mur_ligase_C"/>
    <property type="match status" value="1"/>
</dbReference>
<dbReference type="Pfam" id="PF08245">
    <property type="entry name" value="Mur_ligase_M"/>
    <property type="match status" value="1"/>
</dbReference>
<dbReference type="Pfam" id="PF21799">
    <property type="entry name" value="MurD-like_N"/>
    <property type="match status" value="1"/>
</dbReference>
<dbReference type="SUPFAM" id="SSF51984">
    <property type="entry name" value="MurCD N-terminal domain"/>
    <property type="match status" value="1"/>
</dbReference>
<dbReference type="SUPFAM" id="SSF53623">
    <property type="entry name" value="MurD-like peptide ligases, catalytic domain"/>
    <property type="match status" value="1"/>
</dbReference>
<dbReference type="SUPFAM" id="SSF53244">
    <property type="entry name" value="MurD-like peptide ligases, peptide-binding domain"/>
    <property type="match status" value="1"/>
</dbReference>
<organism>
    <name type="scientific">Salmonella typhimurium (strain LT2 / SGSC1412 / ATCC 700720)</name>
    <dbReference type="NCBI Taxonomy" id="99287"/>
    <lineage>
        <taxon>Bacteria</taxon>
        <taxon>Pseudomonadati</taxon>
        <taxon>Pseudomonadota</taxon>
        <taxon>Gammaproteobacteria</taxon>
        <taxon>Enterobacterales</taxon>
        <taxon>Enterobacteriaceae</taxon>
        <taxon>Salmonella</taxon>
    </lineage>
</organism>
<protein>
    <recommendedName>
        <fullName evidence="2">UDP-N-acetylmuramoylalanine--D-glutamate ligase</fullName>
        <ecNumber evidence="2">6.3.2.9</ecNumber>
    </recommendedName>
    <alternativeName>
        <fullName evidence="2">D-glutamic acid-adding enzyme</fullName>
    </alternativeName>
    <alternativeName>
        <fullName evidence="2">UDP-N-acetylmuramoyl-L-alanyl-D-glutamate synthetase</fullName>
    </alternativeName>
</protein>
<sequence length="438" mass="46998">MADYQDKNVVIIGLGLTGLSCVDFFLARGVTPRVMDTRVTPPGLDKLPQEVERHVGGLNDEWLLAADLIVASPGIALAHPSLSAAASAGVEIVGDIELFCREAQAPIVAITGSNGKSTVTTLVGEMAKAAGVNVGVGGNIGLPALMLLDADRELYVLELSSFQLETTSSLQAAAATVLNVTEDHMDRYPFGLQQYRAAKLRVYEKAKVCVVNADDALTMPVRGADERCVSFGVNMGDYHLNRQQGETWLRVKGEKVLNVKEMKLSGQHNYTNALAALALADAVGLPRASSLKALTTFTGLAHRFQLALEHNGVRWINDSKATNVGSTEAALNGLHVDGTLHLLLGGDGKSADFSPLTRYLTGDRIRLYCFGRDGAQLAALRPEIAQQTETMEEAMRLLAPRVQPGDMVLLSPACASLDQFKNFEQRGDVFTRLAKELG</sequence>
<reference key="1">
    <citation type="journal article" date="2001" name="Nature">
        <title>Complete genome sequence of Salmonella enterica serovar Typhimurium LT2.</title>
        <authorList>
            <person name="McClelland M."/>
            <person name="Sanderson K.E."/>
            <person name="Spieth J."/>
            <person name="Clifton S.W."/>
            <person name="Latreille P."/>
            <person name="Courtney L."/>
            <person name="Porwollik S."/>
            <person name="Ali J."/>
            <person name="Dante M."/>
            <person name="Du F."/>
            <person name="Hou S."/>
            <person name="Layman D."/>
            <person name="Leonard S."/>
            <person name="Nguyen C."/>
            <person name="Scott K."/>
            <person name="Holmes A."/>
            <person name="Grewal N."/>
            <person name="Mulvaney E."/>
            <person name="Ryan E."/>
            <person name="Sun H."/>
            <person name="Florea L."/>
            <person name="Miller W."/>
            <person name="Stoneking T."/>
            <person name="Nhan M."/>
            <person name="Waterston R."/>
            <person name="Wilson R.K."/>
        </authorList>
    </citation>
    <scope>NUCLEOTIDE SEQUENCE [LARGE SCALE GENOMIC DNA]</scope>
    <source>
        <strain>LT2 / SGSC1412 / ATCC 700720</strain>
    </source>
</reference>
<keyword id="KW-0067">ATP-binding</keyword>
<keyword id="KW-0131">Cell cycle</keyword>
<keyword id="KW-0132">Cell division</keyword>
<keyword id="KW-0133">Cell shape</keyword>
<keyword id="KW-0961">Cell wall biogenesis/degradation</keyword>
<keyword id="KW-0963">Cytoplasm</keyword>
<keyword id="KW-0436">Ligase</keyword>
<keyword id="KW-0547">Nucleotide-binding</keyword>
<keyword id="KW-0573">Peptidoglycan synthesis</keyword>
<keyword id="KW-1185">Reference proteome</keyword>
<accession>Q8ZRU4</accession>